<sequence>MSLSNSLGLLGRKVGMMRLFTDDGDTVPVTVVDVSNNRVTQVKTEANDGYDALQVAFGARKASRVTKPAAGHLAKAGVEAGEILKEFRVTADVAGKYAAGTVVPAADVFAVGQLVDVQGTSIGKGYAGTIKRHNMSSQRASHGNSRSHNVPGSIGMAQDPGRVFPGKRMTGHLGDVTVTTQNLNIVRIDEARQLLMIRGAVPGSKGGFVTVRAAIKAKPTTAAKGAN</sequence>
<dbReference type="EMBL" id="CP000316">
    <property type="protein sequence ID" value="ABE42221.1"/>
    <property type="molecule type" value="Genomic_DNA"/>
</dbReference>
<dbReference type="RefSeq" id="WP_011481229.1">
    <property type="nucleotide sequence ID" value="NC_007948.1"/>
</dbReference>
<dbReference type="SMR" id="Q12GX1"/>
<dbReference type="STRING" id="296591.Bpro_0256"/>
<dbReference type="KEGG" id="pol:Bpro_0256"/>
<dbReference type="eggNOG" id="COG0087">
    <property type="taxonomic scope" value="Bacteria"/>
</dbReference>
<dbReference type="HOGENOM" id="CLU_044142_4_1_4"/>
<dbReference type="OrthoDB" id="9806135at2"/>
<dbReference type="Proteomes" id="UP000001983">
    <property type="component" value="Chromosome"/>
</dbReference>
<dbReference type="GO" id="GO:0022625">
    <property type="term" value="C:cytosolic large ribosomal subunit"/>
    <property type="evidence" value="ECO:0007669"/>
    <property type="project" value="TreeGrafter"/>
</dbReference>
<dbReference type="GO" id="GO:0019843">
    <property type="term" value="F:rRNA binding"/>
    <property type="evidence" value="ECO:0007669"/>
    <property type="project" value="UniProtKB-UniRule"/>
</dbReference>
<dbReference type="GO" id="GO:0003735">
    <property type="term" value="F:structural constituent of ribosome"/>
    <property type="evidence" value="ECO:0007669"/>
    <property type="project" value="InterPro"/>
</dbReference>
<dbReference type="GO" id="GO:0006412">
    <property type="term" value="P:translation"/>
    <property type="evidence" value="ECO:0007669"/>
    <property type="project" value="UniProtKB-UniRule"/>
</dbReference>
<dbReference type="FunFam" id="2.40.30.10:FF:000004">
    <property type="entry name" value="50S ribosomal protein L3"/>
    <property type="match status" value="1"/>
</dbReference>
<dbReference type="FunFam" id="3.30.160.810:FF:000001">
    <property type="entry name" value="50S ribosomal protein L3"/>
    <property type="match status" value="1"/>
</dbReference>
<dbReference type="Gene3D" id="3.30.160.810">
    <property type="match status" value="1"/>
</dbReference>
<dbReference type="Gene3D" id="2.40.30.10">
    <property type="entry name" value="Translation factors"/>
    <property type="match status" value="1"/>
</dbReference>
<dbReference type="HAMAP" id="MF_01325_B">
    <property type="entry name" value="Ribosomal_uL3_B"/>
    <property type="match status" value="1"/>
</dbReference>
<dbReference type="InterPro" id="IPR000597">
    <property type="entry name" value="Ribosomal_uL3"/>
</dbReference>
<dbReference type="InterPro" id="IPR019927">
    <property type="entry name" value="Ribosomal_uL3_bac/org-type"/>
</dbReference>
<dbReference type="InterPro" id="IPR019926">
    <property type="entry name" value="Ribosomal_uL3_CS"/>
</dbReference>
<dbReference type="InterPro" id="IPR009000">
    <property type="entry name" value="Transl_B-barrel_sf"/>
</dbReference>
<dbReference type="NCBIfam" id="TIGR03625">
    <property type="entry name" value="L3_bact"/>
    <property type="match status" value="1"/>
</dbReference>
<dbReference type="PANTHER" id="PTHR11229">
    <property type="entry name" value="50S RIBOSOMAL PROTEIN L3"/>
    <property type="match status" value="1"/>
</dbReference>
<dbReference type="PANTHER" id="PTHR11229:SF16">
    <property type="entry name" value="LARGE RIBOSOMAL SUBUNIT PROTEIN UL3C"/>
    <property type="match status" value="1"/>
</dbReference>
<dbReference type="Pfam" id="PF00297">
    <property type="entry name" value="Ribosomal_L3"/>
    <property type="match status" value="1"/>
</dbReference>
<dbReference type="SUPFAM" id="SSF50447">
    <property type="entry name" value="Translation proteins"/>
    <property type="match status" value="1"/>
</dbReference>
<dbReference type="PROSITE" id="PS00474">
    <property type="entry name" value="RIBOSOMAL_L3"/>
    <property type="match status" value="1"/>
</dbReference>
<reference key="1">
    <citation type="journal article" date="2008" name="Appl. Environ. Microbiol.">
        <title>The genome of Polaromonas sp. strain JS666: insights into the evolution of a hydrocarbon- and xenobiotic-degrading bacterium, and features of relevance to biotechnology.</title>
        <authorList>
            <person name="Mattes T.E."/>
            <person name="Alexander A.K."/>
            <person name="Richardson P.M."/>
            <person name="Munk A.C."/>
            <person name="Han C.S."/>
            <person name="Stothard P."/>
            <person name="Coleman N.V."/>
        </authorList>
    </citation>
    <scope>NUCLEOTIDE SEQUENCE [LARGE SCALE GENOMIC DNA]</scope>
    <source>
        <strain>JS666 / ATCC BAA-500</strain>
    </source>
</reference>
<comment type="function">
    <text evidence="1">One of the primary rRNA binding proteins, it binds directly near the 3'-end of the 23S rRNA, where it nucleates assembly of the 50S subunit.</text>
</comment>
<comment type="subunit">
    <text evidence="1">Part of the 50S ribosomal subunit. Forms a cluster with proteins L14 and L19.</text>
</comment>
<comment type="PTM">
    <text evidence="1">Methylated by PrmB.</text>
</comment>
<comment type="similarity">
    <text evidence="1">Belongs to the universal ribosomal protein uL3 family.</text>
</comment>
<proteinExistence type="inferred from homology"/>
<accession>Q12GX1</accession>
<evidence type="ECO:0000255" key="1">
    <source>
        <dbReference type="HAMAP-Rule" id="MF_01325"/>
    </source>
</evidence>
<evidence type="ECO:0000305" key="2"/>
<protein>
    <recommendedName>
        <fullName evidence="1">Large ribosomal subunit protein uL3</fullName>
    </recommendedName>
    <alternativeName>
        <fullName evidence="2">50S ribosomal protein L3</fullName>
    </alternativeName>
</protein>
<keyword id="KW-0488">Methylation</keyword>
<keyword id="KW-1185">Reference proteome</keyword>
<keyword id="KW-0687">Ribonucleoprotein</keyword>
<keyword id="KW-0689">Ribosomal protein</keyword>
<keyword id="KW-0694">RNA-binding</keyword>
<keyword id="KW-0699">rRNA-binding</keyword>
<organism>
    <name type="scientific">Polaromonas sp. (strain JS666 / ATCC BAA-500)</name>
    <dbReference type="NCBI Taxonomy" id="296591"/>
    <lineage>
        <taxon>Bacteria</taxon>
        <taxon>Pseudomonadati</taxon>
        <taxon>Pseudomonadota</taxon>
        <taxon>Betaproteobacteria</taxon>
        <taxon>Burkholderiales</taxon>
        <taxon>Comamonadaceae</taxon>
        <taxon>Polaromonas</taxon>
    </lineage>
</organism>
<gene>
    <name evidence="1" type="primary">rplC</name>
    <name type="ordered locus">Bpro_0256</name>
</gene>
<feature type="chain" id="PRO_1000052105" description="Large ribosomal subunit protein uL3">
    <location>
        <begin position="1"/>
        <end position="227"/>
    </location>
</feature>
<feature type="modified residue" description="N5-methylglutamine" evidence="1">
    <location>
        <position position="158"/>
    </location>
</feature>
<name>RL3_POLSJ</name>